<feature type="chain" id="PRO_0000111203" description="Small ribosomal subunit protein bS18">
    <location>
        <begin position="1"/>
        <end position="75"/>
    </location>
</feature>
<dbReference type="EMBL" id="CR378673">
    <property type="protein sequence ID" value="CAG21635.1"/>
    <property type="molecule type" value="Genomic_DNA"/>
</dbReference>
<dbReference type="RefSeq" id="WP_006233798.1">
    <property type="nucleotide sequence ID" value="NC_006370.1"/>
</dbReference>
<dbReference type="SMR" id="Q6LM43"/>
<dbReference type="STRING" id="298386.PBPRA3337"/>
<dbReference type="KEGG" id="ppr:PBPRA3337"/>
<dbReference type="eggNOG" id="COG0238">
    <property type="taxonomic scope" value="Bacteria"/>
</dbReference>
<dbReference type="HOGENOM" id="CLU_148710_2_3_6"/>
<dbReference type="Proteomes" id="UP000000593">
    <property type="component" value="Chromosome 1"/>
</dbReference>
<dbReference type="GO" id="GO:0022627">
    <property type="term" value="C:cytosolic small ribosomal subunit"/>
    <property type="evidence" value="ECO:0007669"/>
    <property type="project" value="TreeGrafter"/>
</dbReference>
<dbReference type="GO" id="GO:0070181">
    <property type="term" value="F:small ribosomal subunit rRNA binding"/>
    <property type="evidence" value="ECO:0007669"/>
    <property type="project" value="TreeGrafter"/>
</dbReference>
<dbReference type="GO" id="GO:0003735">
    <property type="term" value="F:structural constituent of ribosome"/>
    <property type="evidence" value="ECO:0007669"/>
    <property type="project" value="InterPro"/>
</dbReference>
<dbReference type="GO" id="GO:0006412">
    <property type="term" value="P:translation"/>
    <property type="evidence" value="ECO:0007669"/>
    <property type="project" value="UniProtKB-UniRule"/>
</dbReference>
<dbReference type="FunFam" id="4.10.640.10:FF:000001">
    <property type="entry name" value="30S ribosomal protein S18"/>
    <property type="match status" value="1"/>
</dbReference>
<dbReference type="Gene3D" id="4.10.640.10">
    <property type="entry name" value="Ribosomal protein S18"/>
    <property type="match status" value="1"/>
</dbReference>
<dbReference type="HAMAP" id="MF_00270">
    <property type="entry name" value="Ribosomal_bS18"/>
    <property type="match status" value="1"/>
</dbReference>
<dbReference type="InterPro" id="IPR001648">
    <property type="entry name" value="Ribosomal_bS18"/>
</dbReference>
<dbReference type="InterPro" id="IPR018275">
    <property type="entry name" value="Ribosomal_bS18_CS"/>
</dbReference>
<dbReference type="InterPro" id="IPR036870">
    <property type="entry name" value="Ribosomal_bS18_sf"/>
</dbReference>
<dbReference type="NCBIfam" id="TIGR00165">
    <property type="entry name" value="S18"/>
    <property type="match status" value="1"/>
</dbReference>
<dbReference type="PANTHER" id="PTHR13479">
    <property type="entry name" value="30S RIBOSOMAL PROTEIN S18"/>
    <property type="match status" value="1"/>
</dbReference>
<dbReference type="PANTHER" id="PTHR13479:SF40">
    <property type="entry name" value="SMALL RIBOSOMAL SUBUNIT PROTEIN BS18M"/>
    <property type="match status" value="1"/>
</dbReference>
<dbReference type="Pfam" id="PF01084">
    <property type="entry name" value="Ribosomal_S18"/>
    <property type="match status" value="1"/>
</dbReference>
<dbReference type="PRINTS" id="PR00974">
    <property type="entry name" value="RIBOSOMALS18"/>
</dbReference>
<dbReference type="SUPFAM" id="SSF46911">
    <property type="entry name" value="Ribosomal protein S18"/>
    <property type="match status" value="1"/>
</dbReference>
<dbReference type="PROSITE" id="PS00057">
    <property type="entry name" value="RIBOSOMAL_S18"/>
    <property type="match status" value="1"/>
</dbReference>
<reference key="1">
    <citation type="journal article" date="2005" name="Science">
        <title>Life at depth: Photobacterium profundum genome sequence and expression analysis.</title>
        <authorList>
            <person name="Vezzi A."/>
            <person name="Campanaro S."/>
            <person name="D'Angelo M."/>
            <person name="Simonato F."/>
            <person name="Vitulo N."/>
            <person name="Lauro F.M."/>
            <person name="Cestaro A."/>
            <person name="Malacrida G."/>
            <person name="Simionati B."/>
            <person name="Cannata N."/>
            <person name="Romualdi C."/>
            <person name="Bartlett D.H."/>
            <person name="Valle G."/>
        </authorList>
    </citation>
    <scope>NUCLEOTIDE SEQUENCE [LARGE SCALE GENOMIC DNA]</scope>
    <source>
        <strain>ATCC BAA-1253 / SS9</strain>
    </source>
</reference>
<proteinExistence type="inferred from homology"/>
<comment type="function">
    <text evidence="1">Binds as a heterodimer with protein bS6 to the central domain of the 16S rRNA, where it helps stabilize the platform of the 30S subunit.</text>
</comment>
<comment type="subunit">
    <text evidence="1">Part of the 30S ribosomal subunit. Forms a tight heterodimer with protein bS6.</text>
</comment>
<comment type="similarity">
    <text evidence="1">Belongs to the bacterial ribosomal protein bS18 family.</text>
</comment>
<protein>
    <recommendedName>
        <fullName evidence="1">Small ribosomal subunit protein bS18</fullName>
    </recommendedName>
    <alternativeName>
        <fullName evidence="2">30S ribosomal protein S18</fullName>
    </alternativeName>
</protein>
<sequence length="75" mass="8984">MARFFRRRKFCRFTAEDVQEIDYKDVVTLKNYITEAGKIVPSRITGTRAKYQRQLARAIKRSRYLALLPYTDKHL</sequence>
<accession>Q6LM43</accession>
<name>RS18_PHOPR</name>
<organism>
    <name type="scientific">Photobacterium profundum (strain SS9)</name>
    <dbReference type="NCBI Taxonomy" id="298386"/>
    <lineage>
        <taxon>Bacteria</taxon>
        <taxon>Pseudomonadati</taxon>
        <taxon>Pseudomonadota</taxon>
        <taxon>Gammaproteobacteria</taxon>
        <taxon>Vibrionales</taxon>
        <taxon>Vibrionaceae</taxon>
        <taxon>Photobacterium</taxon>
    </lineage>
</organism>
<evidence type="ECO:0000255" key="1">
    <source>
        <dbReference type="HAMAP-Rule" id="MF_00270"/>
    </source>
</evidence>
<evidence type="ECO:0000305" key="2"/>
<keyword id="KW-1185">Reference proteome</keyword>
<keyword id="KW-0687">Ribonucleoprotein</keyword>
<keyword id="KW-0689">Ribosomal protein</keyword>
<keyword id="KW-0694">RNA-binding</keyword>
<keyword id="KW-0699">rRNA-binding</keyword>
<gene>
    <name evidence="1" type="primary">rpsR</name>
    <name type="ordered locus">PBPRA3337</name>
</gene>